<name>Y1435_METJA</name>
<proteinExistence type="evidence at protein level"/>
<protein>
    <recommendedName>
        <fullName>Uncharacterized protein MJ1435</fullName>
    </recommendedName>
</protein>
<keyword id="KW-0002">3D-structure</keyword>
<keyword id="KW-1185">Reference proteome</keyword>
<gene>
    <name type="ordered locus">MJ1435</name>
</gene>
<accession>Q58830</accession>
<organism>
    <name type="scientific">Methanocaldococcus jannaschii (strain ATCC 43067 / DSM 2661 / JAL-1 / JCM 10045 / NBRC 100440)</name>
    <name type="common">Methanococcus jannaschii</name>
    <dbReference type="NCBI Taxonomy" id="243232"/>
    <lineage>
        <taxon>Archaea</taxon>
        <taxon>Methanobacteriati</taxon>
        <taxon>Methanobacteriota</taxon>
        <taxon>Methanomada group</taxon>
        <taxon>Methanococci</taxon>
        <taxon>Methanococcales</taxon>
        <taxon>Methanocaldococcaceae</taxon>
        <taxon>Methanocaldococcus</taxon>
    </lineage>
</organism>
<sequence>MNKPVKKQQPKKVIPNFEYARRLNGKKVKIFLRNGEVLDAEVTGVSNYEIMVKVGDRNLLVFKHAIDYIEY</sequence>
<evidence type="ECO:0000255" key="1">
    <source>
        <dbReference type="PROSITE-ProRule" id="PRU01346"/>
    </source>
</evidence>
<evidence type="ECO:0007829" key="2">
    <source>
        <dbReference type="PDB" id="4X9C"/>
    </source>
</evidence>
<dbReference type="EMBL" id="L77117">
    <property type="protein sequence ID" value="AAB99450.1"/>
    <property type="molecule type" value="Genomic_DNA"/>
</dbReference>
<dbReference type="PIR" id="B64479">
    <property type="entry name" value="B64479"/>
</dbReference>
<dbReference type="RefSeq" id="WP_010870953.1">
    <property type="nucleotide sequence ID" value="NC_000909.1"/>
</dbReference>
<dbReference type="PDB" id="2QTX">
    <property type="method" value="X-ray"/>
    <property type="resolution" value="2.50 A"/>
    <property type="chains" value="A/B/C/D/E/F/G/H/I/J/K/L=1-71"/>
</dbReference>
<dbReference type="PDB" id="4X9C">
    <property type="method" value="X-ray"/>
    <property type="resolution" value="1.40 A"/>
    <property type="chains" value="A/B/C/D/E/F=1-71"/>
</dbReference>
<dbReference type="PDB" id="4X9D">
    <property type="method" value="X-ray"/>
    <property type="resolution" value="1.50 A"/>
    <property type="chains" value="A/B/C/D/E/F=1-71"/>
</dbReference>
<dbReference type="PDB" id="5DY9">
    <property type="method" value="X-ray"/>
    <property type="resolution" value="1.60 A"/>
    <property type="chains" value="A/B/C/D/E/F/G/H/I/J/K/L=1-71"/>
</dbReference>
<dbReference type="PDBsum" id="2QTX"/>
<dbReference type="PDBsum" id="4X9C"/>
<dbReference type="PDBsum" id="4X9D"/>
<dbReference type="PDBsum" id="5DY9"/>
<dbReference type="SMR" id="Q58830"/>
<dbReference type="FunCoup" id="Q58830">
    <property type="interactions" value="10"/>
</dbReference>
<dbReference type="STRING" id="243232.MJ_1435"/>
<dbReference type="PaxDb" id="243232-MJ_1435"/>
<dbReference type="EnsemblBacteria" id="AAB99450">
    <property type="protein sequence ID" value="AAB99450"/>
    <property type="gene ID" value="MJ_1435"/>
</dbReference>
<dbReference type="GeneID" id="1452339"/>
<dbReference type="KEGG" id="mja:MJ_1435"/>
<dbReference type="eggNOG" id="arCOG08275">
    <property type="taxonomic scope" value="Archaea"/>
</dbReference>
<dbReference type="HOGENOM" id="CLU_2730360_0_0_2"/>
<dbReference type="InParanoid" id="Q58830"/>
<dbReference type="OrthoDB" id="63952at2157"/>
<dbReference type="EvolutionaryTrace" id="Q58830"/>
<dbReference type="Proteomes" id="UP000000805">
    <property type="component" value="Chromosome"/>
</dbReference>
<dbReference type="GO" id="GO:0003723">
    <property type="term" value="F:RNA binding"/>
    <property type="evidence" value="ECO:0007669"/>
    <property type="project" value="InterPro"/>
</dbReference>
<dbReference type="GO" id="GO:0006355">
    <property type="term" value="P:regulation of DNA-templated transcription"/>
    <property type="evidence" value="ECO:0007669"/>
    <property type="project" value="InterPro"/>
</dbReference>
<dbReference type="Gene3D" id="2.30.30.100">
    <property type="match status" value="1"/>
</dbReference>
<dbReference type="InterPro" id="IPR005001">
    <property type="entry name" value="Hfq"/>
</dbReference>
<dbReference type="InterPro" id="IPR010920">
    <property type="entry name" value="LSM_dom_sf"/>
</dbReference>
<dbReference type="InterPro" id="IPR047575">
    <property type="entry name" value="Sm"/>
</dbReference>
<dbReference type="Pfam" id="PF17209">
    <property type="entry name" value="Hfq"/>
    <property type="match status" value="1"/>
</dbReference>
<dbReference type="SUPFAM" id="SSF50182">
    <property type="entry name" value="Sm-like ribonucleoproteins"/>
    <property type="match status" value="1"/>
</dbReference>
<dbReference type="PROSITE" id="PS52002">
    <property type="entry name" value="SM"/>
    <property type="match status" value="1"/>
</dbReference>
<reference key="1">
    <citation type="journal article" date="1996" name="Science">
        <title>Complete genome sequence of the methanogenic archaeon, Methanococcus jannaschii.</title>
        <authorList>
            <person name="Bult C.J."/>
            <person name="White O."/>
            <person name="Olsen G.J."/>
            <person name="Zhou L."/>
            <person name="Fleischmann R.D."/>
            <person name="Sutton G.G."/>
            <person name="Blake J.A."/>
            <person name="FitzGerald L.M."/>
            <person name="Clayton R.A."/>
            <person name="Gocayne J.D."/>
            <person name="Kerlavage A.R."/>
            <person name="Dougherty B.A."/>
            <person name="Tomb J.-F."/>
            <person name="Adams M.D."/>
            <person name="Reich C.I."/>
            <person name="Overbeek R."/>
            <person name="Kirkness E.F."/>
            <person name="Weinstock K.G."/>
            <person name="Merrick J.M."/>
            <person name="Glodek A."/>
            <person name="Scott J.L."/>
            <person name="Geoghagen N.S.M."/>
            <person name="Weidman J.F."/>
            <person name="Fuhrmann J.L."/>
            <person name="Nguyen D."/>
            <person name="Utterback T.R."/>
            <person name="Kelley J.M."/>
            <person name="Peterson J.D."/>
            <person name="Sadow P.W."/>
            <person name="Hanna M.C."/>
            <person name="Cotton M.D."/>
            <person name="Roberts K.M."/>
            <person name="Hurst M.A."/>
            <person name="Kaine B.P."/>
            <person name="Borodovsky M."/>
            <person name="Klenk H.-P."/>
            <person name="Fraser C.M."/>
            <person name="Smith H.O."/>
            <person name="Woese C.R."/>
            <person name="Venter J.C."/>
        </authorList>
    </citation>
    <scope>NUCLEOTIDE SEQUENCE [LARGE SCALE GENOMIC DNA]</scope>
    <source>
        <strain>ATCC 43067 / DSM 2661 / JAL-1 / JCM 10045 / NBRC 100440</strain>
    </source>
</reference>
<feature type="chain" id="PRO_0000107326" description="Uncharacterized protein MJ1435">
    <location>
        <begin position="1"/>
        <end position="71"/>
    </location>
</feature>
<feature type="domain" description="Sm" evidence="1">
    <location>
        <begin position="15"/>
        <end position="71"/>
    </location>
</feature>
<feature type="helix" evidence="2">
    <location>
        <begin position="20"/>
        <end position="23"/>
    </location>
</feature>
<feature type="strand" evidence="2">
    <location>
        <begin position="27"/>
        <end position="32"/>
    </location>
</feature>
<feature type="strand" evidence="2">
    <location>
        <begin position="37"/>
        <end position="45"/>
    </location>
</feature>
<feature type="strand" evidence="2">
    <location>
        <begin position="47"/>
        <end position="54"/>
    </location>
</feature>
<feature type="strand" evidence="2">
    <location>
        <begin position="57"/>
        <end position="62"/>
    </location>
</feature>
<feature type="helix" evidence="2">
    <location>
        <begin position="63"/>
        <end position="65"/>
    </location>
</feature>
<feature type="strand" evidence="2">
    <location>
        <begin position="66"/>
        <end position="71"/>
    </location>
</feature>